<organism>
    <name type="scientific">Mycoplasma pneumoniae (strain ATCC 29342 / M129 / Subtype 1)</name>
    <name type="common">Mycoplasmoides pneumoniae</name>
    <dbReference type="NCBI Taxonomy" id="272634"/>
    <lineage>
        <taxon>Bacteria</taxon>
        <taxon>Bacillati</taxon>
        <taxon>Mycoplasmatota</taxon>
        <taxon>Mycoplasmoidales</taxon>
        <taxon>Mycoplasmoidaceae</taxon>
        <taxon>Mycoplasmoides</taxon>
    </lineage>
</organism>
<keyword id="KW-0963">Cytoplasm</keyword>
<keyword id="KW-0238">DNA-binding</keyword>
<keyword id="KW-1185">Reference proteome</keyword>
<keyword id="KW-0731">Sigma factor</keyword>
<keyword id="KW-0804">Transcription</keyword>
<keyword id="KW-0805">Transcription regulation</keyword>
<comment type="function">
    <text evidence="1">Sigma factors are initiation factors that promote the attachment of RNA polymerase to specific initiation sites and are then released. This sigma factor is the primary sigma factor during exponential growth.</text>
</comment>
<comment type="subunit">
    <text evidence="1">Interacts transiently with the RNA polymerase catalytic core.</text>
</comment>
<comment type="subcellular location">
    <subcellularLocation>
        <location evidence="1">Cytoplasm</location>
    </subcellularLocation>
</comment>
<comment type="similarity">
    <text evidence="1">Belongs to the sigma-70 factor family. RpoD/SigA subfamily.</text>
</comment>
<gene>
    <name evidence="1" type="primary">sigA</name>
    <name type="synonym">rpoD</name>
    <name type="ordered locus">MPN_352</name>
    <name type="ORF">MP484</name>
</gene>
<proteinExistence type="inferred from homology"/>
<evidence type="ECO:0000255" key="1">
    <source>
        <dbReference type="HAMAP-Rule" id="MF_00963"/>
    </source>
</evidence>
<evidence type="ECO:0000256" key="2">
    <source>
        <dbReference type="SAM" id="MobiDB-lite"/>
    </source>
</evidence>
<sequence>MSSPKKNFKKPQPKTENQKQALNEERIAELKKSRILGKNRPFKKMIYVDTKAQRKQKHENVAFLKTLQENKESDVPKKRRGRKPKHAPLKEKNNLKLFDILEGSLKSHTENDDTNKVISLLVEVWEKKNKKKDNNSLSNKDIVNVLSKFELPDDEIIFVLDELRDKGIELPHDVEEHIHEFRANQDLSIIDEDIEELTTKNISNRDKVDDNVRFFLGSLDSSKMLDFESEQRIAKVLNSTDEESRKYAINQLVTSNLRLVVSIAKKHLERGLDFNDLIQEGNLGLLKAISKFNWSLGNKFSTYATWWIKQAITRAIADQARTVRIPVHMVETINRLAKAERALNQELGREPTAEELAEKMGGQAEGFTVKKIAEIKRLSLDPVSLDKTVGHDEESQFGDFVRDTDAQMPDEFTESRSNYEKIDELLNNCLSEQEELIVRMRIGMPPYNETKTLDEVSQKIKIPREKIRQIETKAIRKLRQAVRNNHMSLSFMRGNEKKD</sequence>
<dbReference type="EMBL" id="U00089">
    <property type="protein sequence ID" value="AAB96132.1"/>
    <property type="molecule type" value="Genomic_DNA"/>
</dbReference>
<dbReference type="PIR" id="S73810">
    <property type="entry name" value="S73810"/>
</dbReference>
<dbReference type="RefSeq" id="NP_110040.1">
    <property type="nucleotide sequence ID" value="NC_000912.1"/>
</dbReference>
<dbReference type="RefSeq" id="WP_010874708.1">
    <property type="nucleotide sequence ID" value="NZ_OU342337.1"/>
</dbReference>
<dbReference type="SMR" id="P78022"/>
<dbReference type="IntAct" id="P78022">
    <property type="interactions" value="5"/>
</dbReference>
<dbReference type="STRING" id="272634.MPN_352"/>
<dbReference type="EnsemblBacteria" id="AAB96132">
    <property type="protein sequence ID" value="AAB96132"/>
    <property type="gene ID" value="MPN_352"/>
</dbReference>
<dbReference type="KEGG" id="mpn:MPN_352"/>
<dbReference type="PATRIC" id="fig|272634.6.peg.379"/>
<dbReference type="HOGENOM" id="CLU_014793_7_2_14"/>
<dbReference type="OrthoDB" id="9809557at2"/>
<dbReference type="BioCyc" id="MPNE272634:G1GJ3-555-MONOMER"/>
<dbReference type="Proteomes" id="UP000000808">
    <property type="component" value="Chromosome"/>
</dbReference>
<dbReference type="GO" id="GO:0005737">
    <property type="term" value="C:cytoplasm"/>
    <property type="evidence" value="ECO:0007669"/>
    <property type="project" value="UniProtKB-SubCell"/>
</dbReference>
<dbReference type="GO" id="GO:0003677">
    <property type="term" value="F:DNA binding"/>
    <property type="evidence" value="ECO:0007669"/>
    <property type="project" value="UniProtKB-UniRule"/>
</dbReference>
<dbReference type="GO" id="GO:0016987">
    <property type="term" value="F:sigma factor activity"/>
    <property type="evidence" value="ECO:0007669"/>
    <property type="project" value="UniProtKB-UniRule"/>
</dbReference>
<dbReference type="GO" id="GO:0006352">
    <property type="term" value="P:DNA-templated transcription initiation"/>
    <property type="evidence" value="ECO:0007669"/>
    <property type="project" value="UniProtKB-UniRule"/>
</dbReference>
<dbReference type="Gene3D" id="1.10.601.10">
    <property type="entry name" value="RNA Polymerase Primary Sigma Factor"/>
    <property type="match status" value="1"/>
</dbReference>
<dbReference type="Gene3D" id="1.10.10.10">
    <property type="entry name" value="Winged helix-like DNA-binding domain superfamily/Winged helix DNA-binding domain"/>
    <property type="match status" value="2"/>
</dbReference>
<dbReference type="HAMAP" id="MF_00963">
    <property type="entry name" value="Sigma70_RpoD_SigA"/>
    <property type="match status" value="1"/>
</dbReference>
<dbReference type="InterPro" id="IPR014284">
    <property type="entry name" value="RNA_pol_sigma-70_dom"/>
</dbReference>
<dbReference type="InterPro" id="IPR000943">
    <property type="entry name" value="RNA_pol_sigma70"/>
</dbReference>
<dbReference type="InterPro" id="IPR007627">
    <property type="entry name" value="RNA_pol_sigma70_r2"/>
</dbReference>
<dbReference type="InterPro" id="IPR007624">
    <property type="entry name" value="RNA_pol_sigma70_r3"/>
</dbReference>
<dbReference type="InterPro" id="IPR007630">
    <property type="entry name" value="RNA_pol_sigma70_r4"/>
</dbReference>
<dbReference type="InterPro" id="IPR013325">
    <property type="entry name" value="RNA_pol_sigma_r2"/>
</dbReference>
<dbReference type="InterPro" id="IPR013324">
    <property type="entry name" value="RNA_pol_sigma_r3/r4-like"/>
</dbReference>
<dbReference type="InterPro" id="IPR012760">
    <property type="entry name" value="RNA_pol_sigma_RpoD_C"/>
</dbReference>
<dbReference type="InterPro" id="IPR050239">
    <property type="entry name" value="Sigma-70_RNA_pol_init_factors"/>
</dbReference>
<dbReference type="InterPro" id="IPR028630">
    <property type="entry name" value="Sigma70_RpoD"/>
</dbReference>
<dbReference type="InterPro" id="IPR036388">
    <property type="entry name" value="WH-like_DNA-bd_sf"/>
</dbReference>
<dbReference type="NCBIfam" id="NF004564">
    <property type="entry name" value="PRK05901.2-2"/>
    <property type="match status" value="1"/>
</dbReference>
<dbReference type="NCBIfam" id="TIGR02393">
    <property type="entry name" value="RpoD_Cterm"/>
    <property type="match status" value="1"/>
</dbReference>
<dbReference type="NCBIfam" id="TIGR02937">
    <property type="entry name" value="sigma70-ECF"/>
    <property type="match status" value="1"/>
</dbReference>
<dbReference type="PANTHER" id="PTHR30603">
    <property type="entry name" value="RNA POLYMERASE SIGMA FACTOR RPO"/>
    <property type="match status" value="1"/>
</dbReference>
<dbReference type="PANTHER" id="PTHR30603:SF60">
    <property type="entry name" value="RNA POLYMERASE SIGMA FACTOR RPOD"/>
    <property type="match status" value="1"/>
</dbReference>
<dbReference type="Pfam" id="PF04542">
    <property type="entry name" value="Sigma70_r2"/>
    <property type="match status" value="1"/>
</dbReference>
<dbReference type="Pfam" id="PF04539">
    <property type="entry name" value="Sigma70_r3"/>
    <property type="match status" value="1"/>
</dbReference>
<dbReference type="Pfam" id="PF04545">
    <property type="entry name" value="Sigma70_r4"/>
    <property type="match status" value="1"/>
</dbReference>
<dbReference type="PRINTS" id="PR00046">
    <property type="entry name" value="SIGMA70FCT"/>
</dbReference>
<dbReference type="SUPFAM" id="SSF88946">
    <property type="entry name" value="Sigma2 domain of RNA polymerase sigma factors"/>
    <property type="match status" value="1"/>
</dbReference>
<dbReference type="SUPFAM" id="SSF88659">
    <property type="entry name" value="Sigma3 and sigma4 domains of RNA polymerase sigma factors"/>
    <property type="match status" value="2"/>
</dbReference>
<dbReference type="PROSITE" id="PS00715">
    <property type="entry name" value="SIGMA70_1"/>
    <property type="match status" value="1"/>
</dbReference>
<dbReference type="PROSITE" id="PS00716">
    <property type="entry name" value="SIGMA70_2"/>
    <property type="match status" value="1"/>
</dbReference>
<reference key="1">
    <citation type="journal article" date="1996" name="Nucleic Acids Res.">
        <title>Complete sequence analysis of the genome of the bacterium Mycoplasma pneumoniae.</title>
        <authorList>
            <person name="Himmelreich R."/>
            <person name="Hilbert H."/>
            <person name="Plagens H."/>
            <person name="Pirkl E."/>
            <person name="Li B.-C."/>
            <person name="Herrmann R."/>
        </authorList>
    </citation>
    <scope>NUCLEOTIDE SEQUENCE [LARGE SCALE GENOMIC DNA]</scope>
    <source>
        <strain>ATCC 29342 / M129 / Subtype 1</strain>
    </source>
</reference>
<accession>P78022</accession>
<feature type="chain" id="PRO_0000093900" description="RNA polymerase sigma factor SigA">
    <location>
        <begin position="1"/>
        <end position="499"/>
    </location>
</feature>
<feature type="DNA-binding region" description="H-T-H motif" evidence="1">
    <location>
        <begin position="453"/>
        <end position="472"/>
    </location>
</feature>
<feature type="region of interest" description="Disordered" evidence="2">
    <location>
        <begin position="1"/>
        <end position="25"/>
    </location>
</feature>
<feature type="region of interest" description="Disordered" evidence="2">
    <location>
        <begin position="68"/>
        <end position="89"/>
    </location>
</feature>
<feature type="region of interest" description="Sigma-70 factor domain-2" evidence="1">
    <location>
        <begin position="252"/>
        <end position="322"/>
    </location>
</feature>
<feature type="region of interest" description="Sigma-70 factor domain-3" evidence="1">
    <location>
        <begin position="331"/>
        <end position="412"/>
    </location>
</feature>
<feature type="region of interest" description="Sigma-70 factor domain-4" evidence="1">
    <location>
        <begin position="425"/>
        <end position="480"/>
    </location>
</feature>
<feature type="short sequence motif" description="Interaction with polymerase core subunit RpoC">
    <location>
        <begin position="276"/>
        <end position="279"/>
    </location>
</feature>
<feature type="compositionally biased region" description="Basic residues" evidence="2">
    <location>
        <begin position="1"/>
        <end position="12"/>
    </location>
</feature>
<feature type="compositionally biased region" description="Basic residues" evidence="2">
    <location>
        <begin position="77"/>
        <end position="87"/>
    </location>
</feature>
<protein>
    <recommendedName>
        <fullName evidence="1">RNA polymerase sigma factor SigA</fullName>
    </recommendedName>
    <alternativeName>
        <fullName>Sigma-A</fullName>
    </alternativeName>
</protein>
<name>SIGA_MYCPN</name>